<sequence>MAKNKFNKSWLQDHLTDPYVKMAQKEGYRARAVYKLSEIDEQDHLIKAGMTIVDLGSAPGSWSQYVRNRLTELGKSNPKIESGKPDGQIIAIDILPMEDIADVSFIQGDFREEEGLAALEALLPKSAEGKVDLVLSDMAPNLSGVGVADSARMAFLAEIALDFATAHLKPEGALLIKCFNGSGYSQIVESFKKVFKTVASRKPKASRAKSSEIFLLGKNLKPPK</sequence>
<gene>
    <name evidence="1" type="primary">rlmE</name>
    <name evidence="1" type="synonym">ftsJ</name>
    <name evidence="1" type="synonym">rrmJ</name>
    <name type="ordered locus">Pnuc_1014</name>
</gene>
<organism>
    <name type="scientific">Polynucleobacter asymbioticus (strain DSM 18221 / CIP 109841 / QLW-P1DMWA-1)</name>
    <name type="common">Polynucleobacter necessarius subsp. asymbioticus</name>
    <dbReference type="NCBI Taxonomy" id="312153"/>
    <lineage>
        <taxon>Bacteria</taxon>
        <taxon>Pseudomonadati</taxon>
        <taxon>Pseudomonadota</taxon>
        <taxon>Betaproteobacteria</taxon>
        <taxon>Burkholderiales</taxon>
        <taxon>Burkholderiaceae</taxon>
        <taxon>Polynucleobacter</taxon>
    </lineage>
</organism>
<keyword id="KW-0963">Cytoplasm</keyword>
<keyword id="KW-0489">Methyltransferase</keyword>
<keyword id="KW-1185">Reference proteome</keyword>
<keyword id="KW-0698">rRNA processing</keyword>
<keyword id="KW-0949">S-adenosyl-L-methionine</keyword>
<keyword id="KW-0808">Transferase</keyword>
<feature type="chain" id="PRO_1000087698" description="Ribosomal RNA large subunit methyltransferase E">
    <location>
        <begin position="1"/>
        <end position="224"/>
    </location>
</feature>
<feature type="active site" description="Proton acceptor" evidence="1">
    <location>
        <position position="177"/>
    </location>
</feature>
<feature type="binding site" evidence="1">
    <location>
        <position position="60"/>
    </location>
    <ligand>
        <name>S-adenosyl-L-methionine</name>
        <dbReference type="ChEBI" id="CHEBI:59789"/>
    </ligand>
</feature>
<feature type="binding site" evidence="1">
    <location>
        <position position="62"/>
    </location>
    <ligand>
        <name>S-adenosyl-L-methionine</name>
        <dbReference type="ChEBI" id="CHEBI:59789"/>
    </ligand>
</feature>
<feature type="binding site" evidence="1">
    <location>
        <position position="93"/>
    </location>
    <ligand>
        <name>S-adenosyl-L-methionine</name>
        <dbReference type="ChEBI" id="CHEBI:59789"/>
    </ligand>
</feature>
<feature type="binding site" evidence="1">
    <location>
        <position position="109"/>
    </location>
    <ligand>
        <name>S-adenosyl-L-methionine</name>
        <dbReference type="ChEBI" id="CHEBI:59789"/>
    </ligand>
</feature>
<feature type="binding site" evidence="1">
    <location>
        <position position="137"/>
    </location>
    <ligand>
        <name>S-adenosyl-L-methionine</name>
        <dbReference type="ChEBI" id="CHEBI:59789"/>
    </ligand>
</feature>
<comment type="function">
    <text evidence="1">Specifically methylates the uridine in position 2552 of 23S rRNA at the 2'-O position of the ribose in the fully assembled 50S ribosomal subunit.</text>
</comment>
<comment type="catalytic activity">
    <reaction evidence="1">
        <text>uridine(2552) in 23S rRNA + S-adenosyl-L-methionine = 2'-O-methyluridine(2552) in 23S rRNA + S-adenosyl-L-homocysteine + H(+)</text>
        <dbReference type="Rhea" id="RHEA:42720"/>
        <dbReference type="Rhea" id="RHEA-COMP:10202"/>
        <dbReference type="Rhea" id="RHEA-COMP:10203"/>
        <dbReference type="ChEBI" id="CHEBI:15378"/>
        <dbReference type="ChEBI" id="CHEBI:57856"/>
        <dbReference type="ChEBI" id="CHEBI:59789"/>
        <dbReference type="ChEBI" id="CHEBI:65315"/>
        <dbReference type="ChEBI" id="CHEBI:74478"/>
        <dbReference type="EC" id="2.1.1.166"/>
    </reaction>
</comment>
<comment type="subcellular location">
    <subcellularLocation>
        <location evidence="1">Cytoplasm</location>
    </subcellularLocation>
</comment>
<comment type="similarity">
    <text evidence="1">Belongs to the class I-like SAM-binding methyltransferase superfamily. RNA methyltransferase RlmE family.</text>
</comment>
<evidence type="ECO:0000255" key="1">
    <source>
        <dbReference type="HAMAP-Rule" id="MF_01547"/>
    </source>
</evidence>
<proteinExistence type="inferred from homology"/>
<reference key="1">
    <citation type="journal article" date="2012" name="Stand. Genomic Sci.">
        <title>Complete genome sequence of Polynucleobacter necessarius subsp. asymbioticus type strain (QLW-P1DMWA-1(T)).</title>
        <authorList>
            <person name="Meincke L."/>
            <person name="Copeland A."/>
            <person name="Lapidus A."/>
            <person name="Lucas S."/>
            <person name="Berry K.W."/>
            <person name="Del Rio T.G."/>
            <person name="Hammon N."/>
            <person name="Dalin E."/>
            <person name="Tice H."/>
            <person name="Pitluck S."/>
            <person name="Richardson P."/>
            <person name="Bruce D."/>
            <person name="Goodwin L."/>
            <person name="Han C."/>
            <person name="Tapia R."/>
            <person name="Detter J.C."/>
            <person name="Schmutz J."/>
            <person name="Brettin T."/>
            <person name="Larimer F."/>
            <person name="Land M."/>
            <person name="Hauser L."/>
            <person name="Kyrpides N.C."/>
            <person name="Ivanova N."/>
            <person name="Goker M."/>
            <person name="Woyke T."/>
            <person name="Wu Q.L."/>
            <person name="Pockl M."/>
            <person name="Hahn M.W."/>
            <person name="Klenk H.P."/>
        </authorList>
    </citation>
    <scope>NUCLEOTIDE SEQUENCE [LARGE SCALE GENOMIC DNA]</scope>
    <source>
        <strain>DSM 18221 / CIP 109841 / QLW-P1DMWA-1</strain>
    </source>
</reference>
<name>RLME_POLAQ</name>
<dbReference type="EC" id="2.1.1.166" evidence="1"/>
<dbReference type="EMBL" id="CP000655">
    <property type="protein sequence ID" value="ABP34230.1"/>
    <property type="molecule type" value="Genomic_DNA"/>
</dbReference>
<dbReference type="RefSeq" id="WP_011902855.1">
    <property type="nucleotide sequence ID" value="NC_009379.1"/>
</dbReference>
<dbReference type="SMR" id="A4SXL6"/>
<dbReference type="GeneID" id="31481388"/>
<dbReference type="KEGG" id="pnu:Pnuc_1014"/>
<dbReference type="eggNOG" id="COG0293">
    <property type="taxonomic scope" value="Bacteria"/>
</dbReference>
<dbReference type="HOGENOM" id="CLU_009422_4_1_4"/>
<dbReference type="Proteomes" id="UP000000231">
    <property type="component" value="Chromosome"/>
</dbReference>
<dbReference type="GO" id="GO:0005737">
    <property type="term" value="C:cytoplasm"/>
    <property type="evidence" value="ECO:0007669"/>
    <property type="project" value="UniProtKB-SubCell"/>
</dbReference>
<dbReference type="GO" id="GO:0008650">
    <property type="term" value="F:rRNA (uridine-2'-O-)-methyltransferase activity"/>
    <property type="evidence" value="ECO:0007669"/>
    <property type="project" value="UniProtKB-UniRule"/>
</dbReference>
<dbReference type="Gene3D" id="3.40.50.150">
    <property type="entry name" value="Vaccinia Virus protein VP39"/>
    <property type="match status" value="1"/>
</dbReference>
<dbReference type="HAMAP" id="MF_01547">
    <property type="entry name" value="RNA_methyltr_E"/>
    <property type="match status" value="1"/>
</dbReference>
<dbReference type="InterPro" id="IPR050082">
    <property type="entry name" value="RNA_methyltr_RlmE"/>
</dbReference>
<dbReference type="InterPro" id="IPR002877">
    <property type="entry name" value="RNA_MeTrfase_FtsJ_dom"/>
</dbReference>
<dbReference type="InterPro" id="IPR015507">
    <property type="entry name" value="rRNA-MeTfrase_E"/>
</dbReference>
<dbReference type="InterPro" id="IPR029063">
    <property type="entry name" value="SAM-dependent_MTases_sf"/>
</dbReference>
<dbReference type="PANTHER" id="PTHR10920">
    <property type="entry name" value="RIBOSOMAL RNA METHYLTRANSFERASE"/>
    <property type="match status" value="1"/>
</dbReference>
<dbReference type="PANTHER" id="PTHR10920:SF18">
    <property type="entry name" value="RRNA METHYLTRANSFERASE 2, MITOCHONDRIAL"/>
    <property type="match status" value="1"/>
</dbReference>
<dbReference type="Pfam" id="PF01728">
    <property type="entry name" value="FtsJ"/>
    <property type="match status" value="1"/>
</dbReference>
<dbReference type="PIRSF" id="PIRSF005461">
    <property type="entry name" value="23S_rRNA_mtase"/>
    <property type="match status" value="1"/>
</dbReference>
<dbReference type="SUPFAM" id="SSF53335">
    <property type="entry name" value="S-adenosyl-L-methionine-dependent methyltransferases"/>
    <property type="match status" value="1"/>
</dbReference>
<accession>A4SXL6</accession>
<protein>
    <recommendedName>
        <fullName evidence="1">Ribosomal RNA large subunit methyltransferase E</fullName>
        <ecNumber evidence="1">2.1.1.166</ecNumber>
    </recommendedName>
    <alternativeName>
        <fullName evidence="1">23S rRNA Um2552 methyltransferase</fullName>
    </alternativeName>
    <alternativeName>
        <fullName evidence="1">rRNA (uridine-2'-O-)-methyltransferase</fullName>
    </alternativeName>
</protein>